<protein>
    <recommendedName>
        <fullName evidence="1">PTS system glucose-specific EIICBA component</fullName>
        <ecNumber evidence="1">2.7.1.199</ecNumber>
    </recommendedName>
    <alternativeName>
        <fullName evidence="1">EIICBA-Glc</fullName>
        <shortName evidence="1">EII-Glc</shortName>
    </alternativeName>
    <alternativeName>
        <fullName evidence="5">EIICBA-Glc 1</fullName>
    </alternativeName>
    <domain>
        <recommendedName>
            <fullName evidence="1">Glucose permease IIC component</fullName>
        </recommendedName>
        <alternativeName>
            <fullName evidence="1">PTS system glucose-specific EIIC component</fullName>
        </alternativeName>
    </domain>
    <domain>
        <recommendedName>
            <fullName evidence="1">Glucose-specific phosphotransferase enzyme IIB component</fullName>
        </recommendedName>
        <alternativeName>
            <fullName evidence="1">PTS system glucose-specific EIIB component</fullName>
        </alternativeName>
    </domain>
    <domain>
        <recommendedName>
            <fullName evidence="1">Glucose-specific phosphotransferase enzyme IIA component</fullName>
        </recommendedName>
        <alternativeName>
            <fullName evidence="1">PTS system glucose-specific EIIA component</fullName>
        </alternativeName>
    </domain>
</protein>
<comment type="function">
    <text evidence="1">The phosphoenolpyruvate-dependent sugar phosphotransferase system (sugar PTS), a major carbohydrate active transport system, catalyzes the phosphorylation of incoming sugar substrates concomitantly with their translocation across the cell membrane. This system is involved in glucose transport.</text>
</comment>
<comment type="catalytic activity">
    <reaction evidence="1">
        <text>N(pros)-phospho-L-histidyl-[protein] + D-glucose(out) = D-glucose 6-phosphate(in) + L-histidyl-[protein]</text>
        <dbReference type="Rhea" id="RHEA:33367"/>
        <dbReference type="Rhea" id="RHEA-COMP:9745"/>
        <dbReference type="Rhea" id="RHEA-COMP:9746"/>
        <dbReference type="ChEBI" id="CHEBI:4167"/>
        <dbReference type="ChEBI" id="CHEBI:29979"/>
        <dbReference type="ChEBI" id="CHEBI:61548"/>
        <dbReference type="ChEBI" id="CHEBI:64837"/>
        <dbReference type="EC" id="2.7.1.199"/>
    </reaction>
</comment>
<comment type="subcellular location">
    <subcellularLocation>
        <location evidence="4">Cell membrane</location>
        <topology evidence="4">Multi-pass membrane protein</topology>
    </subcellularLocation>
</comment>
<comment type="domain">
    <text evidence="4">The EIIC domain forms the PTS system translocation channel and contains the specific substrate-binding site.</text>
</comment>
<comment type="domain">
    <text evidence="3">The EIIB domain is phosphorylated by phospho-EIIA on a cysteinyl or histidyl residue, depending on the transported sugar. Then, it transfers the phosphoryl group to the sugar substrate concomitantly with the sugar uptake processed by the EIIC domain.</text>
</comment>
<comment type="domain">
    <text evidence="2">The EIIA domain is phosphorylated by phospho-HPr on a histidyl residue. Then, it transfers the phosphoryl group to the EIIB domain.</text>
</comment>
<accession>Q2FK73</accession>
<keyword id="KW-1003">Cell membrane</keyword>
<keyword id="KW-0418">Kinase</keyword>
<keyword id="KW-0472">Membrane</keyword>
<keyword id="KW-0598">Phosphotransferase system</keyword>
<keyword id="KW-0762">Sugar transport</keyword>
<keyword id="KW-0808">Transferase</keyword>
<keyword id="KW-0812">Transmembrane</keyword>
<keyword id="KW-1133">Transmembrane helix</keyword>
<keyword id="KW-0813">Transport</keyword>
<feature type="chain" id="PRO_0000351390" description="PTS system glucose-specific EIICBA component">
    <location>
        <begin position="1"/>
        <end position="681"/>
    </location>
</feature>
<feature type="transmembrane region" description="Helical" evidence="4">
    <location>
        <begin position="16"/>
        <end position="36"/>
    </location>
</feature>
<feature type="transmembrane region" description="Helical" evidence="4">
    <location>
        <begin position="73"/>
        <end position="93"/>
    </location>
</feature>
<feature type="transmembrane region" description="Helical" evidence="4">
    <location>
        <begin position="126"/>
        <end position="146"/>
    </location>
</feature>
<feature type="transmembrane region" description="Helical" evidence="4">
    <location>
        <begin position="170"/>
        <end position="190"/>
    </location>
</feature>
<feature type="transmembrane region" description="Helical" evidence="4">
    <location>
        <begin position="199"/>
        <end position="219"/>
    </location>
</feature>
<feature type="transmembrane region" description="Helical" evidence="4">
    <location>
        <begin position="273"/>
        <end position="293"/>
    </location>
</feature>
<feature type="transmembrane region" description="Helical" evidence="4">
    <location>
        <begin position="303"/>
        <end position="323"/>
    </location>
</feature>
<feature type="transmembrane region" description="Helical" evidence="4">
    <location>
        <begin position="328"/>
        <end position="348"/>
    </location>
</feature>
<feature type="transmembrane region" description="Helical" evidence="4">
    <location>
        <begin position="355"/>
        <end position="375"/>
    </location>
</feature>
<feature type="transmembrane region" description="Helical" evidence="4">
    <location>
        <begin position="383"/>
        <end position="403"/>
    </location>
</feature>
<feature type="domain" description="PTS EIIC type-1" evidence="4">
    <location>
        <begin position="3"/>
        <end position="414"/>
    </location>
</feature>
<feature type="domain" description="PTS EIIB type-1" evidence="3">
    <location>
        <begin position="425"/>
        <end position="506"/>
    </location>
</feature>
<feature type="domain" description="PTS EIIA type-1" evidence="2">
    <location>
        <begin position="551"/>
        <end position="655"/>
    </location>
</feature>
<feature type="active site" description="Phosphocysteine intermediate; for EIIB activity" evidence="3">
    <location>
        <position position="447"/>
    </location>
</feature>
<feature type="active site" description="Tele-phosphohistidine intermediate; for EIIA activity" evidence="2">
    <location>
        <position position="603"/>
    </location>
</feature>
<organism>
    <name type="scientific">Staphylococcus aureus (strain USA300)</name>
    <dbReference type="NCBI Taxonomy" id="367830"/>
    <lineage>
        <taxon>Bacteria</taxon>
        <taxon>Bacillati</taxon>
        <taxon>Bacillota</taxon>
        <taxon>Bacilli</taxon>
        <taxon>Bacillales</taxon>
        <taxon>Staphylococcaceae</taxon>
        <taxon>Staphylococcus</taxon>
    </lineage>
</organism>
<gene>
    <name type="primary">ptsG</name>
    <name type="synonym">glcA</name>
    <name type="ordered locus">SAUSA300_0191</name>
</gene>
<reference key="1">
    <citation type="journal article" date="2006" name="Lancet">
        <title>Complete genome sequence of USA300, an epidemic clone of community-acquired meticillin-resistant Staphylococcus aureus.</title>
        <authorList>
            <person name="Diep B.A."/>
            <person name="Gill S.R."/>
            <person name="Chang R.F."/>
            <person name="Phan T.H."/>
            <person name="Chen J.H."/>
            <person name="Davidson M.G."/>
            <person name="Lin F."/>
            <person name="Lin J."/>
            <person name="Carleton H.A."/>
            <person name="Mongodin E.F."/>
            <person name="Sensabaugh G.F."/>
            <person name="Perdreau-Remington F."/>
        </authorList>
    </citation>
    <scope>NUCLEOTIDE SEQUENCE [LARGE SCALE GENOMIC DNA]</scope>
    <source>
        <strain>USA300</strain>
    </source>
</reference>
<sequence length="681" mass="73925">MRKKLFGQLQRIGKALMLPVAILPAAGLLLAIGTAMQGESLQHYLPFIQNGGVQTVAKLMTGAGGIIFDNLPMIFALGVAIGLAGGDGVAAIAAFVGYIIMNKTMGDFLQVTPKNIGDPASGYASILGIPTLQTGVFGGIIIGALAAWCYNKFYNINLPSYLGFFAGKRFVPIMMATTSFILAFPMALIWPTIQSGLNAFSTGLLDSNTGVAVFLFGFIKRLLIPFGLHHIFHAPFWFEFGSWKNAAGEIIHGDQRIFIEQIREGAHLTAGKFMQGEFPVMMFGLPAAALAIYHTAKPENKKVVAGLMGSAALTSFLTGITEPLEFSFLFVAPLLFFIHAVLDGLSFLTLYLLDLHLGYTFSGGFIDYFLLGILPNKTQWWLVIPVGLVYAVIYYFVFRFLIVKLKYKTPGREDKQSQAATASATELPYAVLEAMGGKANIKHLDACITRLRVEVNDKSKVDVPGLKDLGASGVLEVGNNMQAIFGPKSDQIKHEMQQIMNGQVVENPTTMEDDKDETVVVAEDKSATSELSHIVHAPLTGEVTPLSEVPDQVFSEKMMGDGIAIKPSQGEVRAPFNGKVQMIFPTKHAIGLVSDSGLELLIHIGLDTVKLNGEGFTLHVEEGQEVKQGDLLINFDLDYIRNHAKSDITPIIVTQGNITNLDFKQGEHGNISFGDQLFEAK</sequence>
<evidence type="ECO:0000250" key="1">
    <source>
        <dbReference type="UniProtKB" id="Q57071"/>
    </source>
</evidence>
<evidence type="ECO:0000255" key="2">
    <source>
        <dbReference type="PROSITE-ProRule" id="PRU00416"/>
    </source>
</evidence>
<evidence type="ECO:0000255" key="3">
    <source>
        <dbReference type="PROSITE-ProRule" id="PRU00421"/>
    </source>
</evidence>
<evidence type="ECO:0000255" key="4">
    <source>
        <dbReference type="PROSITE-ProRule" id="PRU00426"/>
    </source>
</evidence>
<evidence type="ECO:0000305" key="5"/>
<name>PTG3C_STAA3</name>
<dbReference type="EC" id="2.7.1.199" evidence="1"/>
<dbReference type="EMBL" id="CP000255">
    <property type="protein sequence ID" value="ABD20589.1"/>
    <property type="molecule type" value="Genomic_DNA"/>
</dbReference>
<dbReference type="RefSeq" id="WP_001227724.1">
    <property type="nucleotide sequence ID" value="NZ_CP027476.1"/>
</dbReference>
<dbReference type="SMR" id="Q2FK73"/>
<dbReference type="KEGG" id="saa:SAUSA300_0191"/>
<dbReference type="HOGENOM" id="CLU_012312_1_1_9"/>
<dbReference type="Proteomes" id="UP000001939">
    <property type="component" value="Chromosome"/>
</dbReference>
<dbReference type="GO" id="GO:0005886">
    <property type="term" value="C:plasma membrane"/>
    <property type="evidence" value="ECO:0007669"/>
    <property type="project" value="UniProtKB-SubCell"/>
</dbReference>
<dbReference type="GO" id="GO:0055056">
    <property type="term" value="F:D-glucose transmembrane transporter activity"/>
    <property type="evidence" value="ECO:0007669"/>
    <property type="project" value="InterPro"/>
</dbReference>
<dbReference type="GO" id="GO:0016301">
    <property type="term" value="F:kinase activity"/>
    <property type="evidence" value="ECO:0007669"/>
    <property type="project" value="UniProtKB-KW"/>
</dbReference>
<dbReference type="GO" id="GO:0008982">
    <property type="term" value="F:protein-N(PI)-phosphohistidine-sugar phosphotransferase activity"/>
    <property type="evidence" value="ECO:0007669"/>
    <property type="project" value="InterPro"/>
</dbReference>
<dbReference type="GO" id="GO:0090563">
    <property type="term" value="F:protein-phosphocysteine-sugar phosphotransferase activity"/>
    <property type="evidence" value="ECO:0007669"/>
    <property type="project" value="TreeGrafter"/>
</dbReference>
<dbReference type="GO" id="GO:1904659">
    <property type="term" value="P:D-glucose transmembrane transport"/>
    <property type="evidence" value="ECO:0007669"/>
    <property type="project" value="InterPro"/>
</dbReference>
<dbReference type="GO" id="GO:0009401">
    <property type="term" value="P:phosphoenolpyruvate-dependent sugar phosphotransferase system"/>
    <property type="evidence" value="ECO:0007669"/>
    <property type="project" value="UniProtKB-KW"/>
</dbReference>
<dbReference type="CDD" id="cd00210">
    <property type="entry name" value="PTS_IIA_glc"/>
    <property type="match status" value="1"/>
</dbReference>
<dbReference type="CDD" id="cd00212">
    <property type="entry name" value="PTS_IIB_glc"/>
    <property type="match status" value="1"/>
</dbReference>
<dbReference type="FunFam" id="2.70.70.10:FF:000001">
    <property type="entry name" value="PTS system glucose-specific IIA component"/>
    <property type="match status" value="1"/>
</dbReference>
<dbReference type="FunFam" id="3.30.1360.60:FF:000001">
    <property type="entry name" value="PTS system glucose-specific IIBC component PtsG"/>
    <property type="match status" value="1"/>
</dbReference>
<dbReference type="Gene3D" id="2.70.70.10">
    <property type="entry name" value="Glucose Permease (Domain IIA)"/>
    <property type="match status" value="1"/>
</dbReference>
<dbReference type="Gene3D" id="3.30.1360.60">
    <property type="entry name" value="Glucose permease domain IIB"/>
    <property type="match status" value="1"/>
</dbReference>
<dbReference type="InterPro" id="IPR011055">
    <property type="entry name" value="Dup_hybrid_motif"/>
</dbReference>
<dbReference type="InterPro" id="IPR036878">
    <property type="entry name" value="Glu_permease_IIB"/>
</dbReference>
<dbReference type="InterPro" id="IPR018113">
    <property type="entry name" value="PTrfase_EIIB_Cys"/>
</dbReference>
<dbReference type="InterPro" id="IPR001127">
    <property type="entry name" value="PTS_EIIA_1_perm"/>
</dbReference>
<dbReference type="InterPro" id="IPR003352">
    <property type="entry name" value="PTS_EIIC"/>
</dbReference>
<dbReference type="InterPro" id="IPR013013">
    <property type="entry name" value="PTS_EIIC_1"/>
</dbReference>
<dbReference type="InterPro" id="IPR050429">
    <property type="entry name" value="PTS_Glucose_EIICBA"/>
</dbReference>
<dbReference type="InterPro" id="IPR001996">
    <property type="entry name" value="PTS_IIB_1"/>
</dbReference>
<dbReference type="InterPro" id="IPR011299">
    <property type="entry name" value="PTS_IIBC_glc"/>
</dbReference>
<dbReference type="NCBIfam" id="TIGR00826">
    <property type="entry name" value="EIIB_glc"/>
    <property type="match status" value="1"/>
</dbReference>
<dbReference type="NCBIfam" id="TIGR00830">
    <property type="entry name" value="PTBA"/>
    <property type="match status" value="1"/>
</dbReference>
<dbReference type="NCBIfam" id="TIGR02002">
    <property type="entry name" value="PTS-II-BC-glcB"/>
    <property type="match status" value="1"/>
</dbReference>
<dbReference type="PANTHER" id="PTHR30009">
    <property type="entry name" value="CYTOCHROME C-TYPE SYNTHESIS PROTEIN AND PTS TRANSMEMBRANE COMPONENT"/>
    <property type="match status" value="1"/>
</dbReference>
<dbReference type="PANTHER" id="PTHR30009:SF20">
    <property type="entry name" value="PTS SYSTEM GLUCOSE-SPECIFIC EIICB COMPONENT-RELATED"/>
    <property type="match status" value="1"/>
</dbReference>
<dbReference type="Pfam" id="PF00358">
    <property type="entry name" value="PTS_EIIA_1"/>
    <property type="match status" value="1"/>
</dbReference>
<dbReference type="Pfam" id="PF00367">
    <property type="entry name" value="PTS_EIIB"/>
    <property type="match status" value="1"/>
</dbReference>
<dbReference type="Pfam" id="PF02378">
    <property type="entry name" value="PTS_EIIC"/>
    <property type="match status" value="1"/>
</dbReference>
<dbReference type="SUPFAM" id="SSF51261">
    <property type="entry name" value="Duplicated hybrid motif"/>
    <property type="match status" value="1"/>
</dbReference>
<dbReference type="SUPFAM" id="SSF55604">
    <property type="entry name" value="Glucose permease domain IIB"/>
    <property type="match status" value="1"/>
</dbReference>
<dbReference type="PROSITE" id="PS51093">
    <property type="entry name" value="PTS_EIIA_TYPE_1"/>
    <property type="match status" value="1"/>
</dbReference>
<dbReference type="PROSITE" id="PS00371">
    <property type="entry name" value="PTS_EIIA_TYPE_1_HIS"/>
    <property type="match status" value="1"/>
</dbReference>
<dbReference type="PROSITE" id="PS51098">
    <property type="entry name" value="PTS_EIIB_TYPE_1"/>
    <property type="match status" value="1"/>
</dbReference>
<dbReference type="PROSITE" id="PS01035">
    <property type="entry name" value="PTS_EIIB_TYPE_1_CYS"/>
    <property type="match status" value="1"/>
</dbReference>
<dbReference type="PROSITE" id="PS51103">
    <property type="entry name" value="PTS_EIIC_TYPE_1"/>
    <property type="match status" value="1"/>
</dbReference>
<proteinExistence type="inferred from homology"/>